<proteinExistence type="inferred from homology"/>
<sequence length="203" mass="21655">MKVLIAYYSMYGHIHRMAEAVAEGAREVAGAEVLIRRVPETLPADVLEKMGAVETQKKMAQIPVCTIGELADADAIIFGTPTRFGNMCGQMRQFLDATGGLWMKGSLVGKLGSVFTSSATQHGGQESTILSFHITLLHQGMVVVGLPYAFQGQMRNDEIIGGSPYGASTIAGTQGERSPSENDLAAARYQGKHVASIAARLAR</sequence>
<dbReference type="EC" id="1.6.5.2" evidence="1"/>
<dbReference type="EMBL" id="CP000698">
    <property type="protein sequence ID" value="ABQ26686.1"/>
    <property type="molecule type" value="Genomic_DNA"/>
</dbReference>
<dbReference type="RefSeq" id="WP_011939373.1">
    <property type="nucleotide sequence ID" value="NC_009483.1"/>
</dbReference>
<dbReference type="SMR" id="A5G4G8"/>
<dbReference type="STRING" id="351605.Gura_2508"/>
<dbReference type="KEGG" id="gur:Gura_2508"/>
<dbReference type="HOGENOM" id="CLU_051402_0_2_7"/>
<dbReference type="OrthoDB" id="9801479at2"/>
<dbReference type="Proteomes" id="UP000006695">
    <property type="component" value="Chromosome"/>
</dbReference>
<dbReference type="GO" id="GO:0016020">
    <property type="term" value="C:membrane"/>
    <property type="evidence" value="ECO:0007669"/>
    <property type="project" value="TreeGrafter"/>
</dbReference>
<dbReference type="GO" id="GO:0050660">
    <property type="term" value="F:flavin adenine dinucleotide binding"/>
    <property type="evidence" value="ECO:0007669"/>
    <property type="project" value="UniProtKB-UniRule"/>
</dbReference>
<dbReference type="GO" id="GO:0010181">
    <property type="term" value="F:FMN binding"/>
    <property type="evidence" value="ECO:0007669"/>
    <property type="project" value="InterPro"/>
</dbReference>
<dbReference type="GO" id="GO:0051287">
    <property type="term" value="F:NAD binding"/>
    <property type="evidence" value="ECO:0007669"/>
    <property type="project" value="UniProtKB-UniRule"/>
</dbReference>
<dbReference type="GO" id="GO:0050136">
    <property type="term" value="F:NADH:ubiquinone reductase (non-electrogenic) activity"/>
    <property type="evidence" value="ECO:0007669"/>
    <property type="project" value="RHEA"/>
</dbReference>
<dbReference type="GO" id="GO:0050661">
    <property type="term" value="F:NADP binding"/>
    <property type="evidence" value="ECO:0007669"/>
    <property type="project" value="UniProtKB-UniRule"/>
</dbReference>
<dbReference type="GO" id="GO:0008753">
    <property type="term" value="F:NADPH dehydrogenase (quinone) activity"/>
    <property type="evidence" value="ECO:0007669"/>
    <property type="project" value="RHEA"/>
</dbReference>
<dbReference type="FunFam" id="3.40.50.360:FF:000001">
    <property type="entry name" value="NAD(P)H dehydrogenase (Quinone) FQR1-like"/>
    <property type="match status" value="1"/>
</dbReference>
<dbReference type="Gene3D" id="3.40.50.360">
    <property type="match status" value="1"/>
</dbReference>
<dbReference type="HAMAP" id="MF_01017">
    <property type="entry name" value="NQOR"/>
    <property type="match status" value="1"/>
</dbReference>
<dbReference type="InterPro" id="IPR008254">
    <property type="entry name" value="Flavodoxin/NO_synth"/>
</dbReference>
<dbReference type="InterPro" id="IPR029039">
    <property type="entry name" value="Flavoprotein-like_sf"/>
</dbReference>
<dbReference type="InterPro" id="IPR010089">
    <property type="entry name" value="Flavoprotein_WrbA-like"/>
</dbReference>
<dbReference type="InterPro" id="IPR005025">
    <property type="entry name" value="FMN_Rdtase-like_dom"/>
</dbReference>
<dbReference type="InterPro" id="IPR037513">
    <property type="entry name" value="NQO"/>
</dbReference>
<dbReference type="NCBIfam" id="TIGR01755">
    <property type="entry name" value="flav_wrbA"/>
    <property type="match status" value="1"/>
</dbReference>
<dbReference type="NCBIfam" id="NF002999">
    <property type="entry name" value="PRK03767.1"/>
    <property type="match status" value="1"/>
</dbReference>
<dbReference type="PANTHER" id="PTHR30546">
    <property type="entry name" value="FLAVODOXIN-RELATED PROTEIN WRBA-RELATED"/>
    <property type="match status" value="1"/>
</dbReference>
<dbReference type="PANTHER" id="PTHR30546:SF23">
    <property type="entry name" value="FLAVOPROTEIN-LIKE PROTEIN YCP4-RELATED"/>
    <property type="match status" value="1"/>
</dbReference>
<dbReference type="Pfam" id="PF03358">
    <property type="entry name" value="FMN_red"/>
    <property type="match status" value="1"/>
</dbReference>
<dbReference type="SUPFAM" id="SSF52218">
    <property type="entry name" value="Flavoproteins"/>
    <property type="match status" value="1"/>
</dbReference>
<dbReference type="PROSITE" id="PS50902">
    <property type="entry name" value="FLAVODOXIN_LIKE"/>
    <property type="match status" value="1"/>
</dbReference>
<reference key="1">
    <citation type="submission" date="2007-05" db="EMBL/GenBank/DDBJ databases">
        <title>Complete sequence of Geobacter uraniireducens Rf4.</title>
        <authorList>
            <consortium name="US DOE Joint Genome Institute"/>
            <person name="Copeland A."/>
            <person name="Lucas S."/>
            <person name="Lapidus A."/>
            <person name="Barry K."/>
            <person name="Detter J.C."/>
            <person name="Glavina del Rio T."/>
            <person name="Hammon N."/>
            <person name="Israni S."/>
            <person name="Dalin E."/>
            <person name="Tice H."/>
            <person name="Pitluck S."/>
            <person name="Chertkov O."/>
            <person name="Brettin T."/>
            <person name="Bruce D."/>
            <person name="Han C."/>
            <person name="Schmutz J."/>
            <person name="Larimer F."/>
            <person name="Land M."/>
            <person name="Hauser L."/>
            <person name="Kyrpides N."/>
            <person name="Mikhailova N."/>
            <person name="Shelobolina E."/>
            <person name="Aklujkar M."/>
            <person name="Lovley D."/>
            <person name="Richardson P."/>
        </authorList>
    </citation>
    <scope>NUCLEOTIDE SEQUENCE [LARGE SCALE GENOMIC DNA]</scope>
    <source>
        <strain>ATCC BAA-1134 / JCM 13001 / Rf4</strain>
    </source>
</reference>
<gene>
    <name type="ordered locus">Gura_2508</name>
</gene>
<protein>
    <recommendedName>
        <fullName evidence="1">NAD(P)H dehydrogenase (quinone)</fullName>
        <ecNumber evidence="1">1.6.5.2</ecNumber>
    </recommendedName>
    <alternativeName>
        <fullName>Flavoprotein WrbA</fullName>
    </alternativeName>
    <alternativeName>
        <fullName evidence="1">NAD(P)H:quinone oxidoreductase</fullName>
        <shortName evidence="1">NQO</shortName>
    </alternativeName>
</protein>
<name>NQOR_GEOUR</name>
<evidence type="ECO:0000255" key="1">
    <source>
        <dbReference type="HAMAP-Rule" id="MF_01017"/>
    </source>
</evidence>
<keyword id="KW-0285">Flavoprotein</keyword>
<keyword id="KW-0288">FMN</keyword>
<keyword id="KW-0520">NAD</keyword>
<keyword id="KW-0521">NADP</keyword>
<keyword id="KW-0547">Nucleotide-binding</keyword>
<keyword id="KW-0560">Oxidoreductase</keyword>
<keyword id="KW-1185">Reference proteome</keyword>
<comment type="catalytic activity">
    <reaction evidence="1">
        <text>a quinone + NADH + H(+) = a quinol + NAD(+)</text>
        <dbReference type="Rhea" id="RHEA:46160"/>
        <dbReference type="ChEBI" id="CHEBI:15378"/>
        <dbReference type="ChEBI" id="CHEBI:24646"/>
        <dbReference type="ChEBI" id="CHEBI:57540"/>
        <dbReference type="ChEBI" id="CHEBI:57945"/>
        <dbReference type="ChEBI" id="CHEBI:132124"/>
        <dbReference type="EC" id="1.6.5.2"/>
    </reaction>
</comment>
<comment type="catalytic activity">
    <reaction evidence="1">
        <text>a quinone + NADPH + H(+) = a quinol + NADP(+)</text>
        <dbReference type="Rhea" id="RHEA:46164"/>
        <dbReference type="ChEBI" id="CHEBI:15378"/>
        <dbReference type="ChEBI" id="CHEBI:24646"/>
        <dbReference type="ChEBI" id="CHEBI:57783"/>
        <dbReference type="ChEBI" id="CHEBI:58349"/>
        <dbReference type="ChEBI" id="CHEBI:132124"/>
        <dbReference type="EC" id="1.6.5.2"/>
    </reaction>
</comment>
<comment type="cofactor">
    <cofactor evidence="1">
        <name>FMN</name>
        <dbReference type="ChEBI" id="CHEBI:58210"/>
    </cofactor>
    <text evidence="1">Binds 1 FMN per monomer.</text>
</comment>
<comment type="similarity">
    <text evidence="1">Belongs to the WrbA family.</text>
</comment>
<feature type="chain" id="PRO_1000084140" description="NAD(P)H dehydrogenase (quinone)">
    <location>
        <begin position="1"/>
        <end position="203"/>
    </location>
</feature>
<feature type="domain" description="Flavodoxin-like" evidence="1">
    <location>
        <begin position="3"/>
        <end position="194"/>
    </location>
</feature>
<feature type="binding site" evidence="1">
    <location>
        <begin position="9"/>
        <end position="14"/>
    </location>
    <ligand>
        <name>FMN</name>
        <dbReference type="ChEBI" id="CHEBI:58210"/>
    </ligand>
</feature>
<feature type="binding site" evidence="1">
    <location>
        <position position="11"/>
    </location>
    <ligand>
        <name>NAD(+)</name>
        <dbReference type="ChEBI" id="CHEBI:57540"/>
    </ligand>
</feature>
<feature type="binding site" evidence="1">
    <location>
        <begin position="82"/>
        <end position="84"/>
    </location>
    <ligand>
        <name>FMN</name>
        <dbReference type="ChEBI" id="CHEBI:58210"/>
    </ligand>
</feature>
<feature type="binding site" evidence="1">
    <location>
        <position position="102"/>
    </location>
    <ligand>
        <name>substrate</name>
    </ligand>
</feature>
<feature type="binding site" evidence="1">
    <location>
        <begin position="117"/>
        <end position="123"/>
    </location>
    <ligand>
        <name>FMN</name>
        <dbReference type="ChEBI" id="CHEBI:58210"/>
    </ligand>
</feature>
<feature type="binding site" evidence="1">
    <location>
        <position position="138"/>
    </location>
    <ligand>
        <name>FMN</name>
        <dbReference type="ChEBI" id="CHEBI:58210"/>
    </ligand>
</feature>
<accession>A5G4G8</accession>
<organism>
    <name type="scientific">Geotalea uraniireducens (strain Rf4)</name>
    <name type="common">Geobacter uraniireducens</name>
    <dbReference type="NCBI Taxonomy" id="351605"/>
    <lineage>
        <taxon>Bacteria</taxon>
        <taxon>Pseudomonadati</taxon>
        <taxon>Thermodesulfobacteriota</taxon>
        <taxon>Desulfuromonadia</taxon>
        <taxon>Geobacterales</taxon>
        <taxon>Geobacteraceae</taxon>
        <taxon>Geotalea</taxon>
    </lineage>
</organism>